<reference key="1">
    <citation type="journal article" date="1993" name="Gene">
        <title>The macronuclear gamma-tubulin-encoding gene of Euplotes octocarinatus contains two introns and an in-frame TGA.</title>
        <authorList>
            <person name="Liang A."/>
            <person name="Heckmann K."/>
        </authorList>
    </citation>
    <scope>NUCLEOTIDE SEQUENCE [GENOMIC DNA]</scope>
    <source>
        <strain>3(58)-IX</strain>
    </source>
</reference>
<reference key="2">
    <citation type="submission" date="1995-10" db="EMBL/GenBank/DDBJ databases">
        <authorList>
            <person name="Liang A."/>
        </authorList>
    </citation>
    <scope>SEQUENCE REVISION</scope>
</reference>
<sequence length="461" mass="51992">MPREIITCQVGQCGNQIGMEFWKQLCMEHGINPEGILEDFAVNGEDRKDVFFYQADDEHYVPRAVLIDLEPRVINGIQKSAYSSLYNPENIYIAKHGGGAGNNWGRGYTDAEKVQDEILEMIDREADGSDSLEGFVLTHSIAGGTGSGFGSYLLERLNDHYPKKLIQTYSVFPIENDVVVQPYNCLLSIKRLTLNADCVVVLDNNALTSIAVDRLKILQPTFSQINSIVSTVMAASTTTLRYPGYMNNDMVGLIASLVPTPRCHFLMTGYTPLSLDQKFNSVRKTTVLDVMRRLLQTKNIMVTGAVKKGAYMSILNVIQGDVDPTQVHKSLQRIRERKLANFIPWGPASIQVALSKKSPYIDSGHKVSGLMLANHTGIRSIFKVLYDQYRTFRKRDAYMNIFKQTKIFEDNLDEFDSSDEVVKSLIDEYAAAEKMDYINWGNDDDDMQFDPREPPKFSNIQ</sequence>
<keyword id="KW-0963">Cytoplasm</keyword>
<keyword id="KW-0206">Cytoskeleton</keyword>
<keyword id="KW-0342">GTP-binding</keyword>
<keyword id="KW-0493">Microtubule</keyword>
<keyword id="KW-0547">Nucleotide-binding</keyword>
<feature type="chain" id="PRO_0000048462" description="Tubulin gamma-1 chain">
    <location>
        <begin position="1"/>
        <end position="461"/>
    </location>
</feature>
<feature type="binding site" evidence="1">
    <location>
        <begin position="142"/>
        <end position="148"/>
    </location>
    <ligand>
        <name>GTP</name>
        <dbReference type="ChEBI" id="CHEBI:37565"/>
    </ligand>
</feature>
<comment type="function">
    <text>Tubulin is the major constituent of microtubules. The gamma chain is found at microtubule organizing centers (MTOC) such as the spindle poles or the centrosome, suggesting that it is involved in the minus-end nucleation of microtubule assembly.</text>
</comment>
<comment type="subcellular location">
    <subcellularLocation>
        <location evidence="2">Cytoplasm</location>
        <location evidence="2">Cytoskeleton</location>
        <location evidence="2">Microtubule organizing center</location>
        <location evidence="2">Centrosome</location>
    </subcellularLocation>
</comment>
<comment type="similarity">
    <text evidence="2">Belongs to the tubulin family.</text>
</comment>
<proteinExistence type="evidence at transcript level"/>
<dbReference type="EMBL" id="X71353">
    <property type="protein sequence ID" value="CAA50488.1"/>
    <property type="molecule type" value="Genomic_DNA"/>
</dbReference>
<dbReference type="EMBL" id="Y09552">
    <property type="protein sequence ID" value="CAA70743.1"/>
    <property type="molecule type" value="mRNA"/>
</dbReference>
<dbReference type="EMBL" id="Y09554">
    <property type="protein sequence ID" value="CAA70745.1"/>
    <property type="molecule type" value="mRNA"/>
</dbReference>
<dbReference type="SMR" id="P34786"/>
<dbReference type="GO" id="GO:0005813">
    <property type="term" value="C:centrosome"/>
    <property type="evidence" value="ECO:0007669"/>
    <property type="project" value="UniProtKB-SubCell"/>
</dbReference>
<dbReference type="GO" id="GO:0005737">
    <property type="term" value="C:cytoplasm"/>
    <property type="evidence" value="ECO:0007669"/>
    <property type="project" value="UniProtKB-KW"/>
</dbReference>
<dbReference type="GO" id="GO:0000930">
    <property type="term" value="C:gamma-tubulin complex"/>
    <property type="evidence" value="ECO:0007669"/>
    <property type="project" value="InterPro"/>
</dbReference>
<dbReference type="GO" id="GO:0005874">
    <property type="term" value="C:microtubule"/>
    <property type="evidence" value="ECO:0007669"/>
    <property type="project" value="UniProtKB-KW"/>
</dbReference>
<dbReference type="GO" id="GO:0005525">
    <property type="term" value="F:GTP binding"/>
    <property type="evidence" value="ECO:0007669"/>
    <property type="project" value="UniProtKB-KW"/>
</dbReference>
<dbReference type="GO" id="GO:0031122">
    <property type="term" value="P:cytoplasmic microtubule organization"/>
    <property type="evidence" value="ECO:0007669"/>
    <property type="project" value="InterPro"/>
</dbReference>
<dbReference type="GO" id="GO:0007020">
    <property type="term" value="P:microtubule nucleation"/>
    <property type="evidence" value="ECO:0007669"/>
    <property type="project" value="InterPro"/>
</dbReference>
<dbReference type="CDD" id="cd02188">
    <property type="entry name" value="gamma_tubulin"/>
    <property type="match status" value="1"/>
</dbReference>
<dbReference type="FunFam" id="1.10.287.600:FF:000004">
    <property type="entry name" value="Tubulin gamma chain"/>
    <property type="match status" value="1"/>
</dbReference>
<dbReference type="FunFam" id="3.30.1330.20:FF:000003">
    <property type="entry name" value="Tubulin gamma chain"/>
    <property type="match status" value="1"/>
</dbReference>
<dbReference type="FunFam" id="3.40.50.1440:FF:000010">
    <property type="entry name" value="Tubulin gamma chain"/>
    <property type="match status" value="1"/>
</dbReference>
<dbReference type="Gene3D" id="1.10.287.600">
    <property type="entry name" value="Helix hairpin bin"/>
    <property type="match status" value="1"/>
</dbReference>
<dbReference type="Gene3D" id="3.30.1330.20">
    <property type="entry name" value="Tubulin/FtsZ, C-terminal domain"/>
    <property type="match status" value="1"/>
</dbReference>
<dbReference type="Gene3D" id="3.40.50.1440">
    <property type="entry name" value="Tubulin/FtsZ, GTPase domain"/>
    <property type="match status" value="1"/>
</dbReference>
<dbReference type="InterPro" id="IPR002454">
    <property type="entry name" value="Gamma_tubulin"/>
</dbReference>
<dbReference type="InterPro" id="IPR008280">
    <property type="entry name" value="Tub_FtsZ_C"/>
</dbReference>
<dbReference type="InterPro" id="IPR000217">
    <property type="entry name" value="Tubulin"/>
</dbReference>
<dbReference type="InterPro" id="IPR037103">
    <property type="entry name" value="Tubulin/FtsZ-like_C"/>
</dbReference>
<dbReference type="InterPro" id="IPR018316">
    <property type="entry name" value="Tubulin/FtsZ_2-layer-sand-dom"/>
</dbReference>
<dbReference type="InterPro" id="IPR036525">
    <property type="entry name" value="Tubulin/FtsZ_GTPase_sf"/>
</dbReference>
<dbReference type="InterPro" id="IPR023123">
    <property type="entry name" value="Tubulin_C"/>
</dbReference>
<dbReference type="InterPro" id="IPR017975">
    <property type="entry name" value="Tubulin_CS"/>
</dbReference>
<dbReference type="InterPro" id="IPR003008">
    <property type="entry name" value="Tubulin_FtsZ_GTPase"/>
</dbReference>
<dbReference type="PANTHER" id="PTHR11588">
    <property type="entry name" value="TUBULIN"/>
    <property type="match status" value="1"/>
</dbReference>
<dbReference type="Pfam" id="PF00091">
    <property type="entry name" value="Tubulin"/>
    <property type="match status" value="1"/>
</dbReference>
<dbReference type="Pfam" id="PF03953">
    <property type="entry name" value="Tubulin_C"/>
    <property type="match status" value="1"/>
</dbReference>
<dbReference type="PRINTS" id="PR01164">
    <property type="entry name" value="GAMMATUBULIN"/>
</dbReference>
<dbReference type="PRINTS" id="PR01161">
    <property type="entry name" value="TUBULIN"/>
</dbReference>
<dbReference type="SMART" id="SM00864">
    <property type="entry name" value="Tubulin"/>
    <property type="match status" value="1"/>
</dbReference>
<dbReference type="SMART" id="SM00865">
    <property type="entry name" value="Tubulin_C"/>
    <property type="match status" value="1"/>
</dbReference>
<dbReference type="SUPFAM" id="SSF55307">
    <property type="entry name" value="Tubulin C-terminal domain-like"/>
    <property type="match status" value="1"/>
</dbReference>
<dbReference type="SUPFAM" id="SSF52490">
    <property type="entry name" value="Tubulin nucleotide-binding domain-like"/>
    <property type="match status" value="1"/>
</dbReference>
<dbReference type="PROSITE" id="PS00227">
    <property type="entry name" value="TUBULIN"/>
    <property type="match status" value="1"/>
</dbReference>
<evidence type="ECO:0000255" key="1"/>
<evidence type="ECO:0000305" key="2"/>
<protein>
    <recommendedName>
        <fullName>Tubulin gamma-1 chain</fullName>
    </recommendedName>
    <alternativeName>
        <fullName>Gamma-1-tubulin</fullName>
    </alternativeName>
</protein>
<organism>
    <name type="scientific">Euplotoides octocarinatus</name>
    <name type="common">Freshwater ciliate</name>
    <name type="synonym">Euplotes octocarinatus</name>
    <dbReference type="NCBI Taxonomy" id="2716877"/>
    <lineage>
        <taxon>Eukaryota</taxon>
        <taxon>Sar</taxon>
        <taxon>Alveolata</taxon>
        <taxon>Ciliophora</taxon>
        <taxon>Intramacronucleata</taxon>
        <taxon>Spirotrichea</taxon>
        <taxon>Hypotrichia</taxon>
        <taxon>Euplotida</taxon>
        <taxon>Euplotidae</taxon>
        <taxon>Euplotes</taxon>
    </lineage>
</organism>
<accession>P34786</accession>
<name>TBG1_EUPOC</name>